<protein>
    <recommendedName>
        <fullName>Tubulin beta chain</fullName>
    </recommendedName>
    <alternativeName>
        <fullName>Beta-tubulin</fullName>
    </alternativeName>
</protein>
<organism>
    <name type="scientific">Saccharomyces cerevisiae (strain ATCC 204508 / S288c)</name>
    <name type="common">Baker's yeast</name>
    <dbReference type="NCBI Taxonomy" id="559292"/>
    <lineage>
        <taxon>Eukaryota</taxon>
        <taxon>Fungi</taxon>
        <taxon>Dikarya</taxon>
        <taxon>Ascomycota</taxon>
        <taxon>Saccharomycotina</taxon>
        <taxon>Saccharomycetes</taxon>
        <taxon>Saccharomycetales</taxon>
        <taxon>Saccharomycetaceae</taxon>
        <taxon>Saccharomyces</taxon>
    </lineage>
</organism>
<dbReference type="EMBL" id="V01296">
    <property type="protein sequence ID" value="CAA24603.1"/>
    <property type="molecule type" value="Genomic_DNA"/>
</dbReference>
<dbReference type="EMBL" id="D50617">
    <property type="protein sequence ID" value="BAA09202.1"/>
    <property type="molecule type" value="Genomic_DNA"/>
</dbReference>
<dbReference type="EMBL" id="X00209">
    <property type="protein sequence ID" value="CAA25035.1"/>
    <property type="molecule type" value="Genomic_DNA"/>
</dbReference>
<dbReference type="EMBL" id="BK006940">
    <property type="protein sequence ID" value="DAA12403.1"/>
    <property type="molecule type" value="Genomic_DNA"/>
</dbReference>
<dbReference type="PIR" id="S56217">
    <property type="entry name" value="UBBYB"/>
</dbReference>
<dbReference type="RefSeq" id="NP_116616.1">
    <property type="nucleotide sequence ID" value="NM_001179929.1"/>
</dbReference>
<dbReference type="PDB" id="4FFB">
    <property type="method" value="X-ray"/>
    <property type="resolution" value="2.88 A"/>
    <property type="chains" value="B=1-457"/>
</dbReference>
<dbReference type="PDB" id="4U3J">
    <property type="method" value="X-ray"/>
    <property type="resolution" value="2.81 A"/>
    <property type="chains" value="B=1-457"/>
</dbReference>
<dbReference type="PDB" id="5W3F">
    <property type="method" value="EM"/>
    <property type="resolution" value="3.70 A"/>
    <property type="chains" value="B=1-457"/>
</dbReference>
<dbReference type="PDB" id="5W3H">
    <property type="method" value="EM"/>
    <property type="resolution" value="4.00 A"/>
    <property type="chains" value="B=1-457"/>
</dbReference>
<dbReference type="PDB" id="5W3J">
    <property type="method" value="EM"/>
    <property type="resolution" value="4.00 A"/>
    <property type="chains" value="B=1-457"/>
</dbReference>
<dbReference type="PDB" id="8QV0">
    <property type="method" value="EM"/>
    <property type="resolution" value="6.60 A"/>
    <property type="chains" value="B/O/P/Q/R/S/T/U/V/W/X/Y/Z=1-457"/>
</dbReference>
<dbReference type="PDB" id="8QV2">
    <property type="method" value="EM"/>
    <property type="resolution" value="9.20 A"/>
    <property type="chains" value="Bb/Bc/Bd/Be/Bf/Bg/Bh/Bi/Bj/Bk/Bl/Bm/Bn/Bo/Bp/Bq/Br=1-457"/>
</dbReference>
<dbReference type="PDB" id="8QV3">
    <property type="method" value="EM"/>
    <property type="resolution" value="8.20 A"/>
    <property type="chains" value="Bc/Bd=1-457"/>
</dbReference>
<dbReference type="PDBsum" id="4FFB"/>
<dbReference type="PDBsum" id="4U3J"/>
<dbReference type="PDBsum" id="5W3F"/>
<dbReference type="PDBsum" id="5W3H"/>
<dbReference type="PDBsum" id="5W3J"/>
<dbReference type="PDBsum" id="8QV0"/>
<dbReference type="PDBsum" id="8QV2"/>
<dbReference type="PDBsum" id="8QV3"/>
<dbReference type="EMDB" id="EMD-8755"/>
<dbReference type="EMDB" id="EMD-8756"/>
<dbReference type="EMDB" id="EMD-8757"/>
<dbReference type="EMDB" id="EMD-8758"/>
<dbReference type="EMDB" id="EMD-8759"/>
<dbReference type="SMR" id="P02557"/>
<dbReference type="BioGRID" id="31109">
    <property type="interactions" value="489"/>
</dbReference>
<dbReference type="ComplexPortal" id="CPX-1424">
    <property type="entry name" value="Tubulin alpha-beta heterodimeric complex, TUB1 variant"/>
</dbReference>
<dbReference type="ComplexPortal" id="CPX-1425">
    <property type="entry name" value="Tubulin alpha-beta heterodimeric complex, TUB3 variant"/>
</dbReference>
<dbReference type="DIP" id="DIP-2340N"/>
<dbReference type="FunCoup" id="P02557">
    <property type="interactions" value="1893"/>
</dbReference>
<dbReference type="IntAct" id="P02557">
    <property type="interactions" value="341"/>
</dbReference>
<dbReference type="MINT" id="P02557"/>
<dbReference type="STRING" id="4932.YFL037W"/>
<dbReference type="iPTMnet" id="P02557"/>
<dbReference type="PaxDb" id="4932-YFL037W"/>
<dbReference type="PeptideAtlas" id="P02557"/>
<dbReference type="EnsemblFungi" id="YFL037W_mRNA">
    <property type="protein sequence ID" value="YFL037W"/>
    <property type="gene ID" value="YFL037W"/>
</dbReference>
<dbReference type="GeneID" id="850506"/>
<dbReference type="KEGG" id="sce:YFL037W"/>
<dbReference type="AGR" id="SGD:S000001857"/>
<dbReference type="SGD" id="S000001857">
    <property type="gene designation" value="TUB2"/>
</dbReference>
<dbReference type="VEuPathDB" id="FungiDB:YFL037W"/>
<dbReference type="eggNOG" id="KOG1375">
    <property type="taxonomic scope" value="Eukaryota"/>
</dbReference>
<dbReference type="GeneTree" id="ENSGT00940000154394"/>
<dbReference type="HOGENOM" id="CLU_015718_1_1_1"/>
<dbReference type="InParanoid" id="P02557"/>
<dbReference type="OMA" id="WVPRSVN"/>
<dbReference type="OrthoDB" id="1662883at2759"/>
<dbReference type="BioCyc" id="YEAST:G3O-30425-MONOMER"/>
<dbReference type="BioGRID-ORCS" id="850506">
    <property type="hits" value="7 hits in 10 CRISPR screens"/>
</dbReference>
<dbReference type="CD-CODE" id="876000F7">
    <property type="entry name" value="Centrosome"/>
</dbReference>
<dbReference type="EvolutionaryTrace" id="P02557"/>
<dbReference type="PRO" id="PR:P02557"/>
<dbReference type="Proteomes" id="UP000002311">
    <property type="component" value="Chromosome VI"/>
</dbReference>
<dbReference type="RNAct" id="P02557">
    <property type="molecule type" value="protein"/>
</dbReference>
<dbReference type="GO" id="GO:0005737">
    <property type="term" value="C:cytoplasm"/>
    <property type="evidence" value="ECO:0000318"/>
    <property type="project" value="GO_Central"/>
</dbReference>
<dbReference type="GO" id="GO:0005874">
    <property type="term" value="C:microtubule"/>
    <property type="evidence" value="ECO:0000314"/>
    <property type="project" value="SGD"/>
</dbReference>
<dbReference type="GO" id="GO:0045298">
    <property type="term" value="C:tubulin complex"/>
    <property type="evidence" value="ECO:0000314"/>
    <property type="project" value="SGD"/>
</dbReference>
<dbReference type="GO" id="GO:0005525">
    <property type="term" value="F:GTP binding"/>
    <property type="evidence" value="ECO:0000318"/>
    <property type="project" value="GO_Central"/>
</dbReference>
<dbReference type="GO" id="GO:0003924">
    <property type="term" value="F:GTPase activity"/>
    <property type="evidence" value="ECO:0000315"/>
    <property type="project" value="SGD"/>
</dbReference>
<dbReference type="GO" id="GO:0046872">
    <property type="term" value="F:metal ion binding"/>
    <property type="evidence" value="ECO:0007669"/>
    <property type="project" value="UniProtKB-KW"/>
</dbReference>
<dbReference type="GO" id="GO:0005200">
    <property type="term" value="F:structural constituent of cytoskeleton"/>
    <property type="evidence" value="ECO:0000314"/>
    <property type="project" value="SGD"/>
</dbReference>
<dbReference type="GO" id="GO:0031122">
    <property type="term" value="P:cytoplasmic microtubule organization"/>
    <property type="evidence" value="ECO:0000315"/>
    <property type="project" value="SGD"/>
</dbReference>
<dbReference type="GO" id="GO:0007010">
    <property type="term" value="P:cytoskeleton organization"/>
    <property type="evidence" value="ECO:0000315"/>
    <property type="project" value="UniProtKB"/>
</dbReference>
<dbReference type="GO" id="GO:0000226">
    <property type="term" value="P:microtubule cytoskeleton organization"/>
    <property type="evidence" value="ECO:0000315"/>
    <property type="project" value="ComplexPortal"/>
</dbReference>
<dbReference type="GO" id="GO:0007017">
    <property type="term" value="P:microtubule-based process"/>
    <property type="evidence" value="ECO:0000315"/>
    <property type="project" value="UniProtKB"/>
</dbReference>
<dbReference type="GO" id="GO:0000278">
    <property type="term" value="P:mitotic cell cycle"/>
    <property type="evidence" value="ECO:0000318"/>
    <property type="project" value="GO_Central"/>
</dbReference>
<dbReference type="GO" id="GO:0090307">
    <property type="term" value="P:mitotic spindle assembly"/>
    <property type="evidence" value="ECO:0000315"/>
    <property type="project" value="SGD"/>
</dbReference>
<dbReference type="GO" id="GO:0000022">
    <property type="term" value="P:mitotic spindle elongation"/>
    <property type="evidence" value="ECO:0000315"/>
    <property type="project" value="SGD"/>
</dbReference>
<dbReference type="GO" id="GO:0090316">
    <property type="term" value="P:positive regulation of intracellular protein transport"/>
    <property type="evidence" value="ECO:0000315"/>
    <property type="project" value="UniProtKB"/>
</dbReference>
<dbReference type="GO" id="GO:0046677">
    <property type="term" value="P:response to antibiotic"/>
    <property type="evidence" value="ECO:0007669"/>
    <property type="project" value="UniProtKB-KW"/>
</dbReference>
<dbReference type="CDD" id="cd02187">
    <property type="entry name" value="beta_tubulin"/>
    <property type="match status" value="1"/>
</dbReference>
<dbReference type="FunFam" id="1.10.287.600:FF:000006">
    <property type="entry name" value="Tubulin beta chain"/>
    <property type="match status" value="1"/>
</dbReference>
<dbReference type="FunFam" id="3.30.1330.20:FF:000002">
    <property type="entry name" value="Tubulin beta chain"/>
    <property type="match status" value="1"/>
</dbReference>
<dbReference type="FunFam" id="3.40.50.1440:FF:000009">
    <property type="entry name" value="Tubulin beta chain"/>
    <property type="match status" value="1"/>
</dbReference>
<dbReference type="Gene3D" id="1.10.287.600">
    <property type="entry name" value="Helix hairpin bin"/>
    <property type="match status" value="1"/>
</dbReference>
<dbReference type="Gene3D" id="3.30.1330.20">
    <property type="entry name" value="Tubulin/FtsZ, C-terminal domain"/>
    <property type="match status" value="1"/>
</dbReference>
<dbReference type="Gene3D" id="3.40.50.1440">
    <property type="entry name" value="Tubulin/FtsZ, GTPase domain"/>
    <property type="match status" value="1"/>
</dbReference>
<dbReference type="InterPro" id="IPR013838">
    <property type="entry name" value="Beta-tubulin_BS"/>
</dbReference>
<dbReference type="InterPro" id="IPR002453">
    <property type="entry name" value="Beta_tubulin"/>
</dbReference>
<dbReference type="InterPro" id="IPR008280">
    <property type="entry name" value="Tub_FtsZ_C"/>
</dbReference>
<dbReference type="InterPro" id="IPR000217">
    <property type="entry name" value="Tubulin"/>
</dbReference>
<dbReference type="InterPro" id="IPR037103">
    <property type="entry name" value="Tubulin/FtsZ-like_C"/>
</dbReference>
<dbReference type="InterPro" id="IPR018316">
    <property type="entry name" value="Tubulin/FtsZ_2-layer-sand-dom"/>
</dbReference>
<dbReference type="InterPro" id="IPR036525">
    <property type="entry name" value="Tubulin/FtsZ_GTPase_sf"/>
</dbReference>
<dbReference type="InterPro" id="IPR023123">
    <property type="entry name" value="Tubulin_C"/>
</dbReference>
<dbReference type="InterPro" id="IPR017975">
    <property type="entry name" value="Tubulin_CS"/>
</dbReference>
<dbReference type="InterPro" id="IPR003008">
    <property type="entry name" value="Tubulin_FtsZ_GTPase"/>
</dbReference>
<dbReference type="PANTHER" id="PTHR11588">
    <property type="entry name" value="TUBULIN"/>
    <property type="match status" value="1"/>
</dbReference>
<dbReference type="Pfam" id="PF00091">
    <property type="entry name" value="Tubulin"/>
    <property type="match status" value="1"/>
</dbReference>
<dbReference type="Pfam" id="PF03953">
    <property type="entry name" value="Tubulin_C"/>
    <property type="match status" value="1"/>
</dbReference>
<dbReference type="PRINTS" id="PR01163">
    <property type="entry name" value="BETATUBULIN"/>
</dbReference>
<dbReference type="PRINTS" id="PR01161">
    <property type="entry name" value="TUBULIN"/>
</dbReference>
<dbReference type="SMART" id="SM00864">
    <property type="entry name" value="Tubulin"/>
    <property type="match status" value="1"/>
</dbReference>
<dbReference type="SMART" id="SM00865">
    <property type="entry name" value="Tubulin_C"/>
    <property type="match status" value="1"/>
</dbReference>
<dbReference type="SUPFAM" id="SSF55307">
    <property type="entry name" value="Tubulin C-terminal domain-like"/>
    <property type="match status" value="1"/>
</dbReference>
<dbReference type="SUPFAM" id="SSF52490">
    <property type="entry name" value="Tubulin nucleotide-binding domain-like"/>
    <property type="match status" value="1"/>
</dbReference>
<dbReference type="PROSITE" id="PS00227">
    <property type="entry name" value="TUBULIN"/>
    <property type="match status" value="1"/>
</dbReference>
<dbReference type="PROSITE" id="PS00228">
    <property type="entry name" value="TUBULIN_B_AUTOREG"/>
    <property type="match status" value="1"/>
</dbReference>
<keyword id="KW-0002">3D-structure</keyword>
<keyword id="KW-0046">Antibiotic resistance</keyword>
<keyword id="KW-0963">Cytoplasm</keyword>
<keyword id="KW-0206">Cytoskeleton</keyword>
<keyword id="KW-0342">GTP-binding</keyword>
<keyword id="KW-0460">Magnesium</keyword>
<keyword id="KW-0479">Metal-binding</keyword>
<keyword id="KW-0493">Microtubule</keyword>
<keyword id="KW-0547">Nucleotide-binding</keyword>
<keyword id="KW-0597">Phosphoprotein</keyword>
<keyword id="KW-1185">Reference proteome</keyword>
<evidence type="ECO:0000250" key="1">
    <source>
        <dbReference type="UniProtKB" id="P68363"/>
    </source>
</evidence>
<evidence type="ECO:0000250" key="2">
    <source>
        <dbReference type="UniProtKB" id="Q13509"/>
    </source>
</evidence>
<evidence type="ECO:0000256" key="3">
    <source>
        <dbReference type="SAM" id="MobiDB-lite"/>
    </source>
</evidence>
<evidence type="ECO:0000269" key="4">
    <source>
    </source>
</evidence>
<evidence type="ECO:0000269" key="5">
    <source>
    </source>
</evidence>
<evidence type="ECO:0000305" key="6"/>
<evidence type="ECO:0007744" key="7">
    <source>
    </source>
</evidence>
<evidence type="ECO:0007829" key="8">
    <source>
        <dbReference type="PDB" id="4FFB"/>
    </source>
</evidence>
<evidence type="ECO:0007829" key="9">
    <source>
        <dbReference type="PDB" id="4U3J"/>
    </source>
</evidence>
<proteinExistence type="evidence at protein level"/>
<feature type="chain" id="PRO_0000048443" description="Tubulin beta chain">
    <location>
        <begin position="1"/>
        <end position="457"/>
    </location>
</feature>
<feature type="region of interest" description="Disordered" evidence="3">
    <location>
        <begin position="423"/>
        <end position="457"/>
    </location>
</feature>
<feature type="compositionally biased region" description="Acidic residues" evidence="3">
    <location>
        <begin position="429"/>
        <end position="440"/>
    </location>
</feature>
<feature type="binding site" evidence="2">
    <location>
        <position position="11"/>
    </location>
    <ligand>
        <name>GTP</name>
        <dbReference type="ChEBI" id="CHEBI:37565"/>
    </ligand>
</feature>
<feature type="binding site" evidence="1">
    <location>
        <position position="69"/>
    </location>
    <ligand>
        <name>GTP</name>
        <dbReference type="ChEBI" id="CHEBI:37565"/>
    </ligand>
</feature>
<feature type="binding site" evidence="1">
    <location>
        <position position="69"/>
    </location>
    <ligand>
        <name>Mg(2+)</name>
        <dbReference type="ChEBI" id="CHEBI:18420"/>
    </ligand>
</feature>
<feature type="binding site" evidence="2">
    <location>
        <position position="138"/>
    </location>
    <ligand>
        <name>GTP</name>
        <dbReference type="ChEBI" id="CHEBI:37565"/>
    </ligand>
</feature>
<feature type="binding site" evidence="2">
    <location>
        <position position="142"/>
    </location>
    <ligand>
        <name>GTP</name>
        <dbReference type="ChEBI" id="CHEBI:37565"/>
    </ligand>
</feature>
<feature type="binding site" evidence="2">
    <location>
        <position position="143"/>
    </location>
    <ligand>
        <name>GTP</name>
        <dbReference type="ChEBI" id="CHEBI:37565"/>
    </ligand>
</feature>
<feature type="binding site" evidence="2">
    <location>
        <position position="144"/>
    </location>
    <ligand>
        <name>GTP</name>
        <dbReference type="ChEBI" id="CHEBI:37565"/>
    </ligand>
</feature>
<feature type="binding site" evidence="2">
    <location>
        <position position="204"/>
    </location>
    <ligand>
        <name>GTP</name>
        <dbReference type="ChEBI" id="CHEBI:37565"/>
    </ligand>
</feature>
<feature type="binding site" evidence="2">
    <location>
        <position position="226"/>
    </location>
    <ligand>
        <name>GTP</name>
        <dbReference type="ChEBI" id="CHEBI:37565"/>
    </ligand>
</feature>
<feature type="modified residue" description="Phosphoserine" evidence="7">
    <location>
        <position position="278"/>
    </location>
</feature>
<feature type="modified residue" description="Phosphoserine" evidence="7">
    <location>
        <position position="280"/>
    </location>
</feature>
<feature type="mutagenesis site" description="Becomes sensitive to rhizoxin.">
    <original>V</original>
    <variation>N</variation>
    <location>
        <position position="100"/>
    </location>
</feature>
<feature type="mutagenesis site" description="Decreased microtubule stability." evidence="5">
    <original>K</original>
    <variation>Q</variation>
    <location>
        <position position="390"/>
    </location>
</feature>
<feature type="mutagenesis site" description="Increased microtubule polymerization and depolymerization rates. Increased microtubule stability. Decreased kinesin KIP3 subcellular location at microtubule plus ends." evidence="4">
    <original>E</original>
    <variation>K</variation>
    <location>
        <position position="421"/>
    </location>
</feature>
<feature type="sequence conflict" description="In Ref. 1; CAA24603." evidence="6" ref="1">
    <original>T</original>
    <variation>A</variation>
    <location>
        <position position="9"/>
    </location>
</feature>
<feature type="sequence conflict" description="In Ref. 1; CAA24603." evidence="6" ref="1">
    <original>C</original>
    <variation>Y</variation>
    <location>
        <position position="12"/>
    </location>
</feature>
<feature type="sequence conflict" description="In Ref. 1; CAA24603." evidence="6" ref="1">
    <original>G</original>
    <variation>W</variation>
    <location>
        <position position="71"/>
    </location>
</feature>
<feature type="sequence conflict" description="In Ref. 1; CAA24603." evidence="6" ref="1">
    <original>I</original>
    <variation>F</variation>
    <location>
        <position position="152"/>
    </location>
</feature>
<feature type="sequence conflict" description="In Ref. 1; CAA24603." evidence="6" ref="1">
    <original>R</original>
    <variation>K</variation>
    <location>
        <position position="156"/>
    </location>
</feature>
<feature type="sequence conflict" description="In Ref. 1; CAA24603." evidence="6" ref="1">
    <original>F</original>
    <variation>L</variation>
    <location>
        <position position="159"/>
    </location>
</feature>
<feature type="strand" evidence="9">
    <location>
        <begin position="4"/>
        <end position="9"/>
    </location>
</feature>
<feature type="helix" evidence="9">
    <location>
        <begin position="10"/>
        <end position="27"/>
    </location>
</feature>
<feature type="helix" evidence="9">
    <location>
        <begin position="42"/>
        <end position="45"/>
    </location>
</feature>
<feature type="helix" evidence="9">
    <location>
        <begin position="46"/>
        <end position="49"/>
    </location>
</feature>
<feature type="strand" evidence="9">
    <location>
        <begin position="51"/>
        <end position="53"/>
    </location>
</feature>
<feature type="strand" evidence="9">
    <location>
        <begin position="59"/>
        <end position="61"/>
    </location>
</feature>
<feature type="strand" evidence="9">
    <location>
        <begin position="63"/>
        <end position="69"/>
    </location>
</feature>
<feature type="helix" evidence="9">
    <location>
        <begin position="70"/>
        <end position="77"/>
    </location>
</feature>
<feature type="helix" evidence="8">
    <location>
        <begin position="80"/>
        <end position="82"/>
    </location>
</feature>
<feature type="strand" evidence="9">
    <location>
        <begin position="83"/>
        <end position="85"/>
    </location>
</feature>
<feature type="helix" evidence="9">
    <location>
        <begin position="87"/>
        <end position="89"/>
    </location>
</feature>
<feature type="strand" evidence="9">
    <location>
        <begin position="90"/>
        <end position="92"/>
    </location>
</feature>
<feature type="helix" evidence="9">
    <location>
        <begin position="101"/>
        <end position="105"/>
    </location>
</feature>
<feature type="turn" evidence="9">
    <location>
        <begin position="108"/>
        <end position="112"/>
    </location>
</feature>
<feature type="helix" evidence="9">
    <location>
        <begin position="113"/>
        <end position="125"/>
    </location>
</feature>
<feature type="strand" evidence="9">
    <location>
        <begin position="132"/>
        <end position="142"/>
    </location>
</feature>
<feature type="helix" evidence="9">
    <location>
        <begin position="143"/>
        <end position="158"/>
    </location>
</feature>
<feature type="strand" evidence="9">
    <location>
        <begin position="162"/>
        <end position="170"/>
    </location>
</feature>
<feature type="helix" evidence="9">
    <location>
        <begin position="181"/>
        <end position="195"/>
    </location>
</feature>
<feature type="strand" evidence="9">
    <location>
        <begin position="197"/>
        <end position="203"/>
    </location>
</feature>
<feature type="helix" evidence="9">
    <location>
        <begin position="204"/>
        <end position="211"/>
    </location>
</feature>
<feature type="helix" evidence="9">
    <location>
        <begin position="222"/>
        <end position="236"/>
    </location>
</feature>
<feature type="helix" evidence="9">
    <location>
        <begin position="238"/>
        <end position="241"/>
    </location>
</feature>
<feature type="strand" evidence="8">
    <location>
        <begin position="242"/>
        <end position="244"/>
    </location>
</feature>
<feature type="strand" evidence="9">
    <location>
        <begin position="245"/>
        <end position="247"/>
    </location>
</feature>
<feature type="helix" evidence="9">
    <location>
        <begin position="250"/>
        <end position="257"/>
    </location>
</feature>
<feature type="strand" evidence="9">
    <location>
        <begin position="265"/>
        <end position="271"/>
    </location>
</feature>
<feature type="helix" evidence="9">
    <location>
        <begin position="286"/>
        <end position="294"/>
    </location>
</feature>
<feature type="helix" evidence="9">
    <location>
        <begin position="296"/>
        <end position="298"/>
    </location>
</feature>
<feature type="strand" evidence="9">
    <location>
        <begin position="299"/>
        <end position="303"/>
    </location>
</feature>
<feature type="helix" evidence="9">
    <location>
        <begin position="305"/>
        <end position="307"/>
    </location>
</feature>
<feature type="strand" evidence="9">
    <location>
        <begin position="310"/>
        <end position="320"/>
    </location>
</feature>
<feature type="helix" evidence="9">
    <location>
        <begin position="323"/>
        <end position="336"/>
    </location>
</feature>
<feature type="helix" evidence="9">
    <location>
        <begin position="338"/>
        <end position="340"/>
    </location>
</feature>
<feature type="strand" evidence="9">
    <location>
        <begin position="345"/>
        <end position="347"/>
    </location>
</feature>
<feature type="strand" evidence="9">
    <location>
        <begin position="349"/>
        <end position="355"/>
    </location>
</feature>
<feature type="strand" evidence="9">
    <location>
        <begin position="362"/>
        <end position="371"/>
    </location>
</feature>
<feature type="helix" evidence="9">
    <location>
        <begin position="372"/>
        <end position="374"/>
    </location>
</feature>
<feature type="helix" evidence="9">
    <location>
        <begin position="375"/>
        <end position="389"/>
    </location>
</feature>
<feature type="turn" evidence="9">
    <location>
        <begin position="390"/>
        <end position="395"/>
    </location>
</feature>
<feature type="helix" evidence="9">
    <location>
        <begin position="396"/>
        <end position="399"/>
    </location>
</feature>
<feature type="turn" evidence="9">
    <location>
        <begin position="400"/>
        <end position="402"/>
    </location>
</feature>
<feature type="helix" evidence="9">
    <location>
        <begin position="405"/>
        <end position="426"/>
    </location>
</feature>
<reference key="1">
    <citation type="journal article" date="1983" name="Cell">
        <title>Isolation of the beta-tubulin gene from yeast and demonstration of its essential function in vivo.</title>
        <authorList>
            <person name="Neff N.F."/>
            <person name="Thomas J.H."/>
            <person name="Grisafi P."/>
            <person name="Botstein D."/>
        </authorList>
    </citation>
    <scope>NUCLEOTIDE SEQUENCE [GENOMIC DNA]</scope>
</reference>
<reference key="2">
    <citation type="journal article" date="1995" name="Nat. Genet.">
        <title>Analysis of the nucleotide sequence of chromosome VI from Saccharomyces cerevisiae.</title>
        <authorList>
            <person name="Murakami Y."/>
            <person name="Naitou M."/>
            <person name="Hagiwara H."/>
            <person name="Shibata T."/>
            <person name="Ozawa M."/>
            <person name="Sasanuma S."/>
            <person name="Sasanuma M."/>
            <person name="Tsuchiya Y."/>
            <person name="Soeda E."/>
            <person name="Yokoyama K."/>
            <person name="Yamazaki M."/>
            <person name="Tashiro H."/>
            <person name="Eki T."/>
        </authorList>
    </citation>
    <scope>NUCLEOTIDE SEQUENCE [LARGE SCALE GENOMIC DNA]</scope>
    <source>
        <strain>ATCC 204508 / S288c</strain>
    </source>
</reference>
<reference key="3">
    <citation type="journal article" date="2014" name="G3 (Bethesda)">
        <title>The reference genome sequence of Saccharomyces cerevisiae: Then and now.</title>
        <authorList>
            <person name="Engel S.R."/>
            <person name="Dietrich F.S."/>
            <person name="Fisk D.G."/>
            <person name="Binkley G."/>
            <person name="Balakrishnan R."/>
            <person name="Costanzo M.C."/>
            <person name="Dwight S.S."/>
            <person name="Hitz B.C."/>
            <person name="Karra K."/>
            <person name="Nash R.S."/>
            <person name="Weng S."/>
            <person name="Wong E.D."/>
            <person name="Lloyd P."/>
            <person name="Skrzypek M.S."/>
            <person name="Miyasato S.R."/>
            <person name="Simison M."/>
            <person name="Cherry J.M."/>
        </authorList>
    </citation>
    <scope>GENOME REANNOTATION</scope>
    <source>
        <strain>ATCC 204508 / S288c</strain>
    </source>
</reference>
<reference key="4">
    <citation type="journal article" date="1983" name="Nature">
        <title>A yeast gene encoding a protein homologous to the human c-has/bas proto-oncogene product.</title>
        <authorList>
            <person name="Gallwitz D."/>
            <person name="Donath C."/>
            <person name="Sander C."/>
        </authorList>
    </citation>
    <scope>NUCLEOTIDE SEQUENCE [GENOMIC DNA] OF 1-8</scope>
</reference>
<reference key="5">
    <citation type="journal article" date="1990" name="Mol. Gen. Genet.">
        <title>Molecular basis for determining the sensitivity of eucaryotes to the antimitotic drug rhizoxin.</title>
        <authorList>
            <person name="Takahashi M."/>
            <person name="Matsumoto S."/>
            <person name="Iwasaki S."/>
            <person name="Yahara I."/>
        </authorList>
    </citation>
    <scope>ANTIBIOTIC RESISTANCE TO RHIZOXIN</scope>
</reference>
<reference key="6">
    <citation type="journal article" date="2008" name="Mol. Cell. Proteomics">
        <title>A multidimensional chromatography technology for in-depth phosphoproteome analysis.</title>
        <authorList>
            <person name="Albuquerque C.P."/>
            <person name="Smolka M.B."/>
            <person name="Payne S.H."/>
            <person name="Bafna V."/>
            <person name="Eng J."/>
            <person name="Zhou H."/>
        </authorList>
    </citation>
    <scope>PHOSPHORYLATION [LARGE SCALE ANALYSIS] AT SER-278 AND SER-280</scope>
    <scope>IDENTIFICATION BY MASS SPECTROMETRY [LARGE SCALE ANALYSIS]</scope>
</reference>
<reference key="7">
    <citation type="journal article" date="2012" name="Hum. Mol. Genet.">
        <title>An inherited TUBB2B mutation alters a kinesin-binding site and causes polymicrogyria, CFEOM and axon dysinnervation.</title>
        <authorList>
            <person name="Cederquist G.Y."/>
            <person name="Luchniak A."/>
            <person name="Tischfield M.A."/>
            <person name="Peeva M."/>
            <person name="Song Y."/>
            <person name="Menezes M.P."/>
            <person name="Chan W.M."/>
            <person name="Andrews C."/>
            <person name="Chew S."/>
            <person name="Jamieson R.V."/>
            <person name="Gomes L."/>
            <person name="Flaherty M."/>
            <person name="Grant P.E."/>
            <person name="Gupta M.L. Jr."/>
            <person name="Engle E.C."/>
        </authorList>
    </citation>
    <scope>SUBCELLULAR LOCATION</scope>
    <scope>MUTAGENESIS OF GLU-421</scope>
</reference>
<reference key="8">
    <citation type="journal article" date="2017" name="Hum. Mol. Genet.">
        <title>Uner Tan syndrome caused by a homozygous TUBB2B mutation affecting microtubule stability.</title>
        <authorList>
            <person name="Breuss M.W."/>
            <person name="Nguyen T."/>
            <person name="Srivatsan A."/>
            <person name="Leca I."/>
            <person name="Tian G."/>
            <person name="Fritz T."/>
            <person name="Hansen A.H."/>
            <person name="Musaev D."/>
            <person name="McEvoy-Venneri J."/>
            <person name="James K.N."/>
            <person name="Rosti R.O."/>
            <person name="Scott E."/>
            <person name="Tan U."/>
            <person name="Kolodner R.D."/>
            <person name="Cowan N.J."/>
            <person name="Keays D.A."/>
            <person name="Gleeson J.G."/>
        </authorList>
    </citation>
    <scope>FUNCTION</scope>
    <scope>MUTAGENESIS OF LYS-390</scope>
</reference>
<sequence length="457" mass="50923">MREIIHISTGQCGNQIGAAFWETICGEHGLDFNGTYHGHDDIQKERLNVYFNEASSGKWVPRSINVDLEPGTIDAVRNSAIGNLFRPDNYIFGQSSAGNVWAKGHYTEGAELVDSVMDVIRREAEGCDSLQGFQITHSLGGGTGSGMGTLLISKIREEFPDRMMATFSVLPSPKTSDTVVEPYNATLSVHQLVEHSDETFCIDNEALYDICQRTLKLNQPSYGDLNNLVSSVMSGVTTSLRYPGQLNSDLRKLAVNLVPFPRLHFFMVGYAPLTAIGSQSFRSLTVPELTQQMFDAKNMMAAADPRNGRYLTVAAFFRGKVSVKEVEDEMHKVQSKNSDYFVEWIPNNVQTAVCSVAPQGLDMAATFIANSTSIQELFKRVGDQFSAMFKRKAFLHWYTSEGMDELEFSEAESNMNDLVSEYQQYQEATVEDDEEVDENGDFGAPQNQDEPITENFE</sequence>
<comment type="function">
    <text evidence="5">Tubulin is the major constituent of microtubules, a cylinder consisting of laterally associated linear protofilaments composed of alpha- and beta-tubulin heterodimers (PubMed:28013290). Microtubules grow by the addition of GTP-tubulin dimers to the microtubule end, where a stabilizing cap forms. Below the cap, tubulin dimers are in GDP-bound state, owing to GTPase activity of alpha-tubulin.</text>
</comment>
<comment type="cofactor">
    <cofactor evidence="1">
        <name>Mg(2+)</name>
        <dbReference type="ChEBI" id="CHEBI:18420"/>
    </cofactor>
</comment>
<comment type="subunit">
    <text>Dimer of alpha and beta chains. A typical microtubule is a hollow water-filled tube with an outer diameter of 25 nm and an inner diameter of 15 nM. Alpha-beta heterodimers associate head-to-tail to form protofilaments running lengthwise along the microtubule wall with the beta-tubulin subunit facing the microtubule plus end conferring a structural polarity. Microtubules usually have 13 protofilaments but different protofilament numbers can be found in some organisms and specialized cells.</text>
</comment>
<comment type="interaction">
    <interactant intactId="EBI-18986">
        <id>P02557</id>
    </interactant>
    <interactant intactId="EBI-18991">
        <id>P48606</id>
        <label>RBL2</label>
    </interactant>
    <organismsDiffer>false</organismsDiffer>
    <experiments>2</experiments>
</comment>
<comment type="interaction">
    <interactant intactId="EBI-18986">
        <id>P02557</id>
    </interactant>
    <interactant intactId="EBI-18976">
        <id>P09733</id>
        <label>TUB1</label>
    </interactant>
    <organismsDiffer>false</organismsDiffer>
    <experiments>2</experiments>
</comment>
<comment type="subcellular location">
    <subcellularLocation>
        <location evidence="4">Cytoplasm</location>
        <location evidence="4">Cytoskeleton</location>
    </subcellularLocation>
    <text evidence="4">Colocalizes with kinesin KIP3 at the plus ends of growing microtubules and along the microtubule lattice.</text>
</comment>
<comment type="miscellaneous">
    <text>Rhizoxin, an antibiotic that exhibits potent anti-mitotic activity against most eukaryotic cells except for yeasts, binds to beta tubulin.</text>
</comment>
<comment type="similarity">
    <text evidence="6">Belongs to the tubulin family.</text>
</comment>
<gene>
    <name type="primary">TUB2</name>
    <name type="ordered locus">YFL037W</name>
</gene>
<accession>P02557</accession>
<accession>D6VTJ3</accession>
<name>TBB_YEAST</name>